<proteinExistence type="inferred from homology"/>
<geneLocation type="chloroplast"/>
<name>RK36_PHATC</name>
<evidence type="ECO:0000255" key="1">
    <source>
        <dbReference type="HAMAP-Rule" id="MF_00251"/>
    </source>
</evidence>
<evidence type="ECO:0000305" key="2"/>
<feature type="chain" id="PRO_0000276844" description="Large ribosomal subunit protein bL36c">
    <location>
        <begin position="1"/>
        <end position="37"/>
    </location>
</feature>
<dbReference type="EMBL" id="EF067920">
    <property type="protein sequence ID" value="ABK20695.1"/>
    <property type="molecule type" value="Genomic_DNA"/>
</dbReference>
<dbReference type="RefSeq" id="YP_874472.1">
    <property type="nucleotide sequence ID" value="NC_008588.1"/>
</dbReference>
<dbReference type="SMR" id="A0T0J7"/>
<dbReference type="FunCoup" id="A0T0J7">
    <property type="interactions" value="1"/>
</dbReference>
<dbReference type="STRING" id="556484.A0T0J7"/>
<dbReference type="GeneID" id="4524647"/>
<dbReference type="InParanoid" id="A0T0J7"/>
<dbReference type="Proteomes" id="UP000000759">
    <property type="component" value="Chloroplast"/>
</dbReference>
<dbReference type="GO" id="GO:0009507">
    <property type="term" value="C:chloroplast"/>
    <property type="evidence" value="ECO:0007669"/>
    <property type="project" value="UniProtKB-SubCell"/>
</dbReference>
<dbReference type="GO" id="GO:1990904">
    <property type="term" value="C:ribonucleoprotein complex"/>
    <property type="evidence" value="ECO:0007669"/>
    <property type="project" value="UniProtKB-KW"/>
</dbReference>
<dbReference type="GO" id="GO:0005840">
    <property type="term" value="C:ribosome"/>
    <property type="evidence" value="ECO:0007669"/>
    <property type="project" value="UniProtKB-KW"/>
</dbReference>
<dbReference type="GO" id="GO:0003735">
    <property type="term" value="F:structural constituent of ribosome"/>
    <property type="evidence" value="ECO:0007669"/>
    <property type="project" value="InterPro"/>
</dbReference>
<dbReference type="GO" id="GO:0006412">
    <property type="term" value="P:translation"/>
    <property type="evidence" value="ECO:0007669"/>
    <property type="project" value="UniProtKB-UniRule"/>
</dbReference>
<dbReference type="HAMAP" id="MF_00251">
    <property type="entry name" value="Ribosomal_bL36"/>
    <property type="match status" value="1"/>
</dbReference>
<dbReference type="InterPro" id="IPR000473">
    <property type="entry name" value="Ribosomal_bL36"/>
</dbReference>
<dbReference type="InterPro" id="IPR035977">
    <property type="entry name" value="Ribosomal_bL36_sp"/>
</dbReference>
<dbReference type="NCBIfam" id="TIGR01022">
    <property type="entry name" value="rpmJ_bact"/>
    <property type="match status" value="1"/>
</dbReference>
<dbReference type="PANTHER" id="PTHR42888">
    <property type="entry name" value="50S RIBOSOMAL PROTEIN L36, CHLOROPLASTIC"/>
    <property type="match status" value="1"/>
</dbReference>
<dbReference type="PANTHER" id="PTHR42888:SF1">
    <property type="entry name" value="LARGE RIBOSOMAL SUBUNIT PROTEIN BL36C"/>
    <property type="match status" value="1"/>
</dbReference>
<dbReference type="Pfam" id="PF00444">
    <property type="entry name" value="Ribosomal_L36"/>
    <property type="match status" value="1"/>
</dbReference>
<dbReference type="SUPFAM" id="SSF57840">
    <property type="entry name" value="Ribosomal protein L36"/>
    <property type="match status" value="1"/>
</dbReference>
<dbReference type="PROSITE" id="PS00828">
    <property type="entry name" value="RIBOSOMAL_L36"/>
    <property type="match status" value="1"/>
</dbReference>
<reference key="1">
    <citation type="journal article" date="2007" name="Mol. Genet. Genomics">
        <title>Chloroplast genomes of the diatoms Phaeodactylum tricornutum and Thalassiosira pseudonana: comparison with other plastid genomes of the red lineage.</title>
        <authorList>
            <person name="Oudot-Le Secq M.-P."/>
            <person name="Grimwood J."/>
            <person name="Shapiro H."/>
            <person name="Armbrust E.V."/>
            <person name="Bowler C."/>
            <person name="Green B.R."/>
        </authorList>
    </citation>
    <scope>NUCLEOTIDE SEQUENCE [LARGE SCALE GENOMIC DNA]</scope>
    <source>
        <strain>CCAP 1055/1</strain>
    </source>
</reference>
<organism>
    <name type="scientific">Phaeodactylum tricornutum (strain CCAP 1055/1)</name>
    <dbReference type="NCBI Taxonomy" id="556484"/>
    <lineage>
        <taxon>Eukaryota</taxon>
        <taxon>Sar</taxon>
        <taxon>Stramenopiles</taxon>
        <taxon>Ochrophyta</taxon>
        <taxon>Bacillariophyta</taxon>
        <taxon>Bacillariophyceae</taxon>
        <taxon>Bacillariophycidae</taxon>
        <taxon>Naviculales</taxon>
        <taxon>Phaeodactylaceae</taxon>
        <taxon>Phaeodactylum</taxon>
    </lineage>
</organism>
<comment type="subcellular location">
    <subcellularLocation>
        <location>Plastid</location>
        <location>Chloroplast</location>
    </subcellularLocation>
</comment>
<comment type="similarity">
    <text evidence="1">Belongs to the bacterial ribosomal protein bL36 family.</text>
</comment>
<keyword id="KW-0150">Chloroplast</keyword>
<keyword id="KW-0934">Plastid</keyword>
<keyword id="KW-1185">Reference proteome</keyword>
<keyword id="KW-0687">Ribonucleoprotein</keyword>
<keyword id="KW-0689">Ribosomal protein</keyword>
<gene>
    <name evidence="1" type="primary">rpl36</name>
</gene>
<protein>
    <recommendedName>
        <fullName evidence="1">Large ribosomal subunit protein bL36c</fullName>
    </recommendedName>
    <alternativeName>
        <fullName evidence="2">50S ribosomal protein L36, chloroplastic</fullName>
    </alternativeName>
</protein>
<accession>A0T0J7</accession>
<sequence>MKVRPSVKKMCDKCRVIKRHGKIMVICSNPKHKQRQG</sequence>